<protein>
    <recommendedName>
        <fullName evidence="1">Ubiquitin-related modifier 1 homolog 2</fullName>
    </recommendedName>
</protein>
<sequence>MQFTLEFGGGLELLCDSVKIHKVNINLLNDSDILTMKDLLSWVRTNLIKERPEMFMKGDTVRPGVLVLVNDCDWELSGQLDTTLEDKDVIVFISTLHGG</sequence>
<evidence type="ECO:0000255" key="1">
    <source>
        <dbReference type="HAMAP-Rule" id="MF_03048"/>
    </source>
</evidence>
<reference key="1">
    <citation type="journal article" date="2000" name="Nature">
        <title>Sequence and analysis of chromosome 3 of the plant Arabidopsis thaliana.</title>
        <authorList>
            <person name="Salanoubat M."/>
            <person name="Lemcke K."/>
            <person name="Rieger M."/>
            <person name="Ansorge W."/>
            <person name="Unseld M."/>
            <person name="Fartmann B."/>
            <person name="Valle G."/>
            <person name="Bloecker H."/>
            <person name="Perez-Alonso M."/>
            <person name="Obermaier B."/>
            <person name="Delseny M."/>
            <person name="Boutry M."/>
            <person name="Grivell L.A."/>
            <person name="Mache R."/>
            <person name="Puigdomenech P."/>
            <person name="De Simone V."/>
            <person name="Choisne N."/>
            <person name="Artiguenave F."/>
            <person name="Robert C."/>
            <person name="Brottier P."/>
            <person name="Wincker P."/>
            <person name="Cattolico L."/>
            <person name="Weissenbach J."/>
            <person name="Saurin W."/>
            <person name="Quetier F."/>
            <person name="Schaefer M."/>
            <person name="Mueller-Auer S."/>
            <person name="Gabel C."/>
            <person name="Fuchs M."/>
            <person name="Benes V."/>
            <person name="Wurmbach E."/>
            <person name="Drzonek H."/>
            <person name="Erfle H."/>
            <person name="Jordan N."/>
            <person name="Bangert S."/>
            <person name="Wiedelmann R."/>
            <person name="Kranz H."/>
            <person name="Voss H."/>
            <person name="Holland R."/>
            <person name="Brandt P."/>
            <person name="Nyakatura G."/>
            <person name="Vezzi A."/>
            <person name="D'Angelo M."/>
            <person name="Pallavicini A."/>
            <person name="Toppo S."/>
            <person name="Simionati B."/>
            <person name="Conrad A."/>
            <person name="Hornischer K."/>
            <person name="Kauer G."/>
            <person name="Loehnert T.-H."/>
            <person name="Nordsiek G."/>
            <person name="Reichelt J."/>
            <person name="Scharfe M."/>
            <person name="Schoen O."/>
            <person name="Bargues M."/>
            <person name="Terol J."/>
            <person name="Climent J."/>
            <person name="Navarro P."/>
            <person name="Collado C."/>
            <person name="Perez-Perez A."/>
            <person name="Ottenwaelder B."/>
            <person name="Duchemin D."/>
            <person name="Cooke R."/>
            <person name="Laudie M."/>
            <person name="Berger-Llauro C."/>
            <person name="Purnelle B."/>
            <person name="Masuy D."/>
            <person name="de Haan M."/>
            <person name="Maarse A.C."/>
            <person name="Alcaraz J.-P."/>
            <person name="Cottet A."/>
            <person name="Casacuberta E."/>
            <person name="Monfort A."/>
            <person name="Argiriou A."/>
            <person name="Flores M."/>
            <person name="Liguori R."/>
            <person name="Vitale D."/>
            <person name="Mannhaupt G."/>
            <person name="Haase D."/>
            <person name="Schoof H."/>
            <person name="Rudd S."/>
            <person name="Zaccaria P."/>
            <person name="Mewes H.-W."/>
            <person name="Mayer K.F.X."/>
            <person name="Kaul S."/>
            <person name="Town C.D."/>
            <person name="Koo H.L."/>
            <person name="Tallon L.J."/>
            <person name="Jenkins J."/>
            <person name="Rooney T."/>
            <person name="Rizzo M."/>
            <person name="Walts A."/>
            <person name="Utterback T."/>
            <person name="Fujii C.Y."/>
            <person name="Shea T.P."/>
            <person name="Creasy T.H."/>
            <person name="Haas B."/>
            <person name="Maiti R."/>
            <person name="Wu D."/>
            <person name="Peterson J."/>
            <person name="Van Aken S."/>
            <person name="Pai G."/>
            <person name="Militscher J."/>
            <person name="Sellers P."/>
            <person name="Gill J.E."/>
            <person name="Feldblyum T.V."/>
            <person name="Preuss D."/>
            <person name="Lin X."/>
            <person name="Nierman W.C."/>
            <person name="Salzberg S.L."/>
            <person name="White O."/>
            <person name="Venter J.C."/>
            <person name="Fraser C.M."/>
            <person name="Kaneko T."/>
            <person name="Nakamura Y."/>
            <person name="Sato S."/>
            <person name="Kato T."/>
            <person name="Asamizu E."/>
            <person name="Sasamoto S."/>
            <person name="Kimura T."/>
            <person name="Idesawa K."/>
            <person name="Kawashima K."/>
            <person name="Kishida Y."/>
            <person name="Kiyokawa C."/>
            <person name="Kohara M."/>
            <person name="Matsumoto M."/>
            <person name="Matsuno A."/>
            <person name="Muraki A."/>
            <person name="Nakayama S."/>
            <person name="Nakazaki N."/>
            <person name="Shinpo S."/>
            <person name="Takeuchi C."/>
            <person name="Wada T."/>
            <person name="Watanabe A."/>
            <person name="Yamada M."/>
            <person name="Yasuda M."/>
            <person name="Tabata S."/>
        </authorList>
    </citation>
    <scope>NUCLEOTIDE SEQUENCE [LARGE SCALE GENOMIC DNA]</scope>
    <source>
        <strain>cv. Columbia</strain>
    </source>
</reference>
<reference key="2">
    <citation type="journal article" date="2017" name="Plant J.">
        <title>Araport11: a complete reannotation of the Arabidopsis thaliana reference genome.</title>
        <authorList>
            <person name="Cheng C.Y."/>
            <person name="Krishnakumar V."/>
            <person name="Chan A.P."/>
            <person name="Thibaud-Nissen F."/>
            <person name="Schobel S."/>
            <person name="Town C.D."/>
        </authorList>
    </citation>
    <scope>GENOME REANNOTATION</scope>
    <source>
        <strain>cv. Columbia</strain>
    </source>
</reference>
<comment type="function">
    <text evidence="1">Acts as a sulfur carrier required for 2-thiolation of mcm(5)S(2)U at tRNA wobble positions of cytosolic tRNA(Lys), tRNA(Glu) and tRNA(Gln). Serves as sulfur donor in tRNA 2-thiolation reaction by being thiocarboxylated (-COSH) at its C-terminus by MOCS3. The sulfur is then transferred to tRNA to form 2-thiolation of mcm(5)S(2)U. Also acts as a ubiquitin-like protein (UBL) that is covalently conjugated via an isopeptide bond to lysine residues of target proteins. The thiocarboxylated form serves as substrate for conjugation and oxidative stress specifically induces the formation of UBL-protein conjugates.</text>
</comment>
<comment type="pathway">
    <text evidence="1">tRNA modification; 5-methoxycarbonylmethyl-2-thiouridine-tRNA biosynthesis.</text>
</comment>
<comment type="subcellular location">
    <subcellularLocation>
        <location evidence="1">Cytoplasm</location>
    </subcellularLocation>
</comment>
<comment type="PTM">
    <text evidence="1">C-terminal thiocarboxylation occurs in 2 steps, it is first acyl-adenylated (-COAMP) via the hesA/moeB/thiF part of the MOCS3 homolog, then thiocarboxylated (-COSH) via the rhodanese domain of the MOCS3 homolog.</text>
</comment>
<comment type="similarity">
    <text evidence="1">Belongs to the URM1 family.</text>
</comment>
<gene>
    <name evidence="1" type="primary">URM1-2</name>
    <name type="ordered locus">At3g61113</name>
    <name type="ORF">T20K12</name>
</gene>
<accession>B3H7G2</accession>
<proteinExistence type="inferred from homology"/>
<organism>
    <name type="scientific">Arabidopsis thaliana</name>
    <name type="common">Mouse-ear cress</name>
    <dbReference type="NCBI Taxonomy" id="3702"/>
    <lineage>
        <taxon>Eukaryota</taxon>
        <taxon>Viridiplantae</taxon>
        <taxon>Streptophyta</taxon>
        <taxon>Embryophyta</taxon>
        <taxon>Tracheophyta</taxon>
        <taxon>Spermatophyta</taxon>
        <taxon>Magnoliopsida</taxon>
        <taxon>eudicotyledons</taxon>
        <taxon>Gunneridae</taxon>
        <taxon>Pentapetalae</taxon>
        <taxon>rosids</taxon>
        <taxon>malvids</taxon>
        <taxon>Brassicales</taxon>
        <taxon>Brassicaceae</taxon>
        <taxon>Camelineae</taxon>
        <taxon>Arabidopsis</taxon>
    </lineage>
</organism>
<feature type="chain" id="PRO_0000367868" description="Ubiquitin-related modifier 1 homolog 2">
    <location>
        <begin position="1"/>
        <end position="99"/>
    </location>
</feature>
<feature type="modified residue" description="1-thioglycine" evidence="1">
    <location>
        <position position="99"/>
    </location>
</feature>
<feature type="cross-link" description="Glycyl lysine isopeptide (Gly-Lys) (interchain with K-? in acceptor proteins)" evidence="1">
    <location>
        <position position="99"/>
    </location>
</feature>
<dbReference type="EMBL" id="AL137898">
    <property type="status" value="NOT_ANNOTATED_CDS"/>
    <property type="molecule type" value="Genomic_DNA"/>
</dbReference>
<dbReference type="EMBL" id="CP002686">
    <property type="protein sequence ID" value="AEE80156.1"/>
    <property type="molecule type" value="Genomic_DNA"/>
</dbReference>
<dbReference type="RefSeq" id="NP_001118872.1">
    <property type="nucleotide sequence ID" value="NM_001125400.2"/>
</dbReference>
<dbReference type="SMR" id="B3H7G2"/>
<dbReference type="FunCoup" id="B3H7G2">
    <property type="interactions" value="3080"/>
</dbReference>
<dbReference type="STRING" id="3702.B3H7G2"/>
<dbReference type="PaxDb" id="3702-AT3G61113.1"/>
<dbReference type="ProteomicsDB" id="228574"/>
<dbReference type="EnsemblPlants" id="AT3G61113.1">
    <property type="protein sequence ID" value="AT3G61113.1"/>
    <property type="gene ID" value="AT3G61113"/>
</dbReference>
<dbReference type="GeneID" id="6241165"/>
<dbReference type="Gramene" id="AT3G61113.1">
    <property type="protein sequence ID" value="AT3G61113.1"/>
    <property type="gene ID" value="AT3G61113"/>
</dbReference>
<dbReference type="KEGG" id="ath:AT3G61113"/>
<dbReference type="Araport" id="AT3G61113"/>
<dbReference type="TAIR" id="AT3G61113">
    <property type="gene designation" value="URM12"/>
</dbReference>
<dbReference type="eggNOG" id="KOG4146">
    <property type="taxonomic scope" value="Eukaryota"/>
</dbReference>
<dbReference type="HOGENOM" id="CLU_148208_0_1_1"/>
<dbReference type="InParanoid" id="B3H7G2"/>
<dbReference type="OMA" id="DYELQPN"/>
<dbReference type="PhylomeDB" id="B3H7G2"/>
<dbReference type="UniPathway" id="UPA00988"/>
<dbReference type="PRO" id="PR:B3H7G2"/>
<dbReference type="Proteomes" id="UP000006548">
    <property type="component" value="Chromosome 3"/>
</dbReference>
<dbReference type="ExpressionAtlas" id="B3H7G2">
    <property type="expression patterns" value="baseline and differential"/>
</dbReference>
<dbReference type="GO" id="GO:0005829">
    <property type="term" value="C:cytosol"/>
    <property type="evidence" value="ECO:0007669"/>
    <property type="project" value="UniProtKB-UniRule"/>
</dbReference>
<dbReference type="GO" id="GO:0032447">
    <property type="term" value="P:protein urmylation"/>
    <property type="evidence" value="ECO:0007669"/>
    <property type="project" value="UniProtKB-UniRule"/>
</dbReference>
<dbReference type="GO" id="GO:0034227">
    <property type="term" value="P:tRNA thio-modification"/>
    <property type="evidence" value="ECO:0007669"/>
    <property type="project" value="UniProtKB-UniRule"/>
</dbReference>
<dbReference type="GO" id="GO:0002098">
    <property type="term" value="P:tRNA wobble uridine modification"/>
    <property type="evidence" value="ECO:0007669"/>
    <property type="project" value="UniProtKB-UniRule"/>
</dbReference>
<dbReference type="CDD" id="cd01764">
    <property type="entry name" value="Ubl_Urm1"/>
    <property type="match status" value="1"/>
</dbReference>
<dbReference type="Gene3D" id="3.10.20.30">
    <property type="match status" value="1"/>
</dbReference>
<dbReference type="HAMAP" id="MF_03048">
    <property type="entry name" value="Urm1"/>
    <property type="match status" value="1"/>
</dbReference>
<dbReference type="InterPro" id="IPR012675">
    <property type="entry name" value="Beta-grasp_dom_sf"/>
</dbReference>
<dbReference type="InterPro" id="IPR016155">
    <property type="entry name" value="Mopterin_synth/thiamin_S_b"/>
</dbReference>
<dbReference type="InterPro" id="IPR015221">
    <property type="entry name" value="Urm1"/>
</dbReference>
<dbReference type="PANTHER" id="PTHR14986">
    <property type="entry name" value="RURM1 PROTEIN"/>
    <property type="match status" value="1"/>
</dbReference>
<dbReference type="Pfam" id="PF09138">
    <property type="entry name" value="Urm1"/>
    <property type="match status" value="1"/>
</dbReference>
<dbReference type="PIRSF" id="PIRSF037379">
    <property type="entry name" value="Ubiquitin-related_modifier_1"/>
    <property type="match status" value="1"/>
</dbReference>
<dbReference type="SUPFAM" id="SSF54285">
    <property type="entry name" value="MoaD/ThiS"/>
    <property type="match status" value="1"/>
</dbReference>
<keyword id="KW-0963">Cytoplasm</keyword>
<keyword id="KW-1017">Isopeptide bond</keyword>
<keyword id="KW-1185">Reference proteome</keyword>
<keyword id="KW-0819">tRNA processing</keyword>
<keyword id="KW-0833">Ubl conjugation pathway</keyword>
<name>URM12_ARATH</name>